<dbReference type="EMBL" id="X73124">
    <property type="protein sequence ID" value="CAA51616.1"/>
    <property type="status" value="ALT_FRAME"/>
    <property type="molecule type" value="Genomic_DNA"/>
</dbReference>
<dbReference type="EMBL" id="AL009126">
    <property type="protein sequence ID" value="CAB15820.2"/>
    <property type="molecule type" value="Genomic_DNA"/>
</dbReference>
<dbReference type="PIR" id="S39715">
    <property type="entry name" value="S39715"/>
</dbReference>
<dbReference type="RefSeq" id="NP_391673.2">
    <property type="nucleotide sequence ID" value="NC_000964.3"/>
</dbReference>
<dbReference type="RefSeq" id="WP_010886635.1">
    <property type="nucleotide sequence ID" value="NZ_OZ025638.1"/>
</dbReference>
<dbReference type="SMR" id="P39618"/>
<dbReference type="FunCoup" id="P39618">
    <property type="interactions" value="18"/>
</dbReference>
<dbReference type="STRING" id="224308.BSU37940"/>
<dbReference type="TCDB" id="2.A.40.5.2">
    <property type="family name" value="the nucleobase/ascorbate transporter (nat) or nucleobase:cation symporter-2 (ncs2) family"/>
</dbReference>
<dbReference type="PaxDb" id="224308-BSU37940"/>
<dbReference type="EnsemblBacteria" id="CAB15820">
    <property type="protein sequence ID" value="CAB15820"/>
    <property type="gene ID" value="BSU_37940"/>
</dbReference>
<dbReference type="GeneID" id="937261"/>
<dbReference type="KEGG" id="bsu:BSU37940"/>
<dbReference type="PATRIC" id="fig|224308.179.peg.4108"/>
<dbReference type="eggNOG" id="COG2233">
    <property type="taxonomic scope" value="Bacteria"/>
</dbReference>
<dbReference type="InParanoid" id="P39618"/>
<dbReference type="OrthoDB" id="5597247at2"/>
<dbReference type="PhylomeDB" id="P39618"/>
<dbReference type="BioCyc" id="BSUB:BSU37940-MONOMER"/>
<dbReference type="Proteomes" id="UP000001570">
    <property type="component" value="Chromosome"/>
</dbReference>
<dbReference type="GO" id="GO:0005886">
    <property type="term" value="C:plasma membrane"/>
    <property type="evidence" value="ECO:0000318"/>
    <property type="project" value="GO_Central"/>
</dbReference>
<dbReference type="GO" id="GO:0042907">
    <property type="term" value="F:xanthine transmembrane transporter activity"/>
    <property type="evidence" value="ECO:0000318"/>
    <property type="project" value="GO_Central"/>
</dbReference>
<dbReference type="GO" id="GO:0042906">
    <property type="term" value="P:xanthine transport"/>
    <property type="evidence" value="ECO:0000318"/>
    <property type="project" value="GO_Central"/>
</dbReference>
<dbReference type="InterPro" id="IPR006043">
    <property type="entry name" value="NCS2"/>
</dbReference>
<dbReference type="InterPro" id="IPR006042">
    <property type="entry name" value="Xan_ur_permease"/>
</dbReference>
<dbReference type="NCBIfam" id="NF037981">
    <property type="entry name" value="NCS2_1"/>
    <property type="match status" value="1"/>
</dbReference>
<dbReference type="PANTHER" id="PTHR42810">
    <property type="entry name" value="PURINE PERMEASE C1399.01C-RELATED"/>
    <property type="match status" value="1"/>
</dbReference>
<dbReference type="PANTHER" id="PTHR42810:SF1">
    <property type="entry name" value="PURINE PERMEASE YWDJ-RELATED"/>
    <property type="match status" value="1"/>
</dbReference>
<dbReference type="Pfam" id="PF00860">
    <property type="entry name" value="Xan_ur_permease"/>
    <property type="match status" value="1"/>
</dbReference>
<dbReference type="PROSITE" id="PS01116">
    <property type="entry name" value="XANTH_URACIL_PERMASE"/>
    <property type="match status" value="1"/>
</dbReference>
<keyword id="KW-1003">Cell membrane</keyword>
<keyword id="KW-0472">Membrane</keyword>
<keyword id="KW-1185">Reference proteome</keyword>
<keyword id="KW-0812">Transmembrane</keyword>
<keyword id="KW-1133">Transmembrane helix</keyword>
<keyword id="KW-0813">Transport</keyword>
<comment type="subcellular location">
    <subcellularLocation>
        <location evidence="2">Cell membrane</location>
        <topology evidence="2">Multi-pass membrane protein</topology>
    </subcellularLocation>
</comment>
<comment type="induction">
    <text>Negatively regulated by TnrA under nitrogen-limited conditions.</text>
</comment>
<comment type="similarity">
    <text evidence="2">Belongs to the nucleobase:cation symporter-2 (NCS2) (TC 2.A.40) family.</text>
</comment>
<comment type="sequence caution" evidence="2">
    <conflict type="frameshift">
        <sequence resource="EMBL-CDS" id="CAA51616"/>
    </conflict>
</comment>
<accession>P39618</accession>
<protein>
    <recommendedName>
        <fullName>Putative purine permease YwdJ</fullName>
    </recommendedName>
</protein>
<organism>
    <name type="scientific">Bacillus subtilis (strain 168)</name>
    <dbReference type="NCBI Taxonomy" id="224308"/>
    <lineage>
        <taxon>Bacteria</taxon>
        <taxon>Bacillati</taxon>
        <taxon>Bacillota</taxon>
        <taxon>Bacilli</taxon>
        <taxon>Bacillales</taxon>
        <taxon>Bacillaceae</taxon>
        <taxon>Bacillus</taxon>
    </lineage>
</organism>
<gene>
    <name type="primary">ywdJ</name>
    <name type="ordered locus">BSU37940</name>
    <name type="ORF">ipa-60d</name>
</gene>
<name>YWDJ_BACSU</name>
<proteinExistence type="evidence at transcript level"/>
<sequence length="440" mass="47374">MKLVLGALQWTAFIIAAAIVVPVAVAQSFHLDHSDSARLIQSTFFVLGIAAVIQCLKGHRLPINESPAGLWWGVYTIYAGLTGTVFATYGDTLRGLQGALLVSAVCFFLLSVFKVIDRLAKLFTPVVTGVYLLLLVMQLSQPIIKGILGIGYRQDGVDGLVFGLALVVIAAAFIMTNSNIMFFKQYSILLALFGGWVLFAAAGAAKPIEMPDRLFQLPSLFPFGTPLFNSGLIITSIFITILLIVNMLASMKVVDIAMKKFSKQPDGKHHERHAGFAASFSHLLSGLTGAIAPVPISGAAGFIETTKMPSKKPFMLGSILVIVISVIPFFMNTFASLPSPVGFAVNFVVFSAMGGLAFAEFDSYEKEESKRVRSIIGISLLTGVGIMFVPETALKGLHPVFISLLSNGLVLGTLAAIAADQFQLWRRRKSDNLVSTENKH</sequence>
<feature type="chain" id="PRO_0000165973" description="Putative purine permease YwdJ">
    <location>
        <begin position="1"/>
        <end position="440"/>
    </location>
</feature>
<feature type="transmembrane region" description="Helical" evidence="1">
    <location>
        <begin position="3"/>
        <end position="23"/>
    </location>
</feature>
<feature type="transmembrane region" description="Helical" evidence="1">
    <location>
        <begin position="39"/>
        <end position="59"/>
    </location>
</feature>
<feature type="transmembrane region" description="Helical" evidence="1">
    <location>
        <begin position="67"/>
        <end position="87"/>
    </location>
</feature>
<feature type="transmembrane region" description="Helical" evidence="1">
    <location>
        <begin position="96"/>
        <end position="116"/>
    </location>
</feature>
<feature type="transmembrane region" description="Helical" evidence="1">
    <location>
        <begin position="130"/>
        <end position="150"/>
    </location>
</feature>
<feature type="transmembrane region" description="Helical" evidence="1">
    <location>
        <begin position="156"/>
        <end position="176"/>
    </location>
</feature>
<feature type="transmembrane region" description="Helical" evidence="1">
    <location>
        <begin position="188"/>
        <end position="208"/>
    </location>
</feature>
<feature type="transmembrane region" description="Helical" evidence="1">
    <location>
        <begin position="231"/>
        <end position="251"/>
    </location>
</feature>
<feature type="transmembrane region" description="Helical" evidence="1">
    <location>
        <begin position="283"/>
        <end position="303"/>
    </location>
</feature>
<feature type="transmembrane region" description="Helical" evidence="1">
    <location>
        <begin position="314"/>
        <end position="334"/>
    </location>
</feature>
<feature type="transmembrane region" description="Helical" evidence="1">
    <location>
        <begin position="341"/>
        <end position="361"/>
    </location>
</feature>
<feature type="transmembrane region" description="Helical" evidence="1">
    <location>
        <begin position="374"/>
        <end position="394"/>
    </location>
</feature>
<feature type="transmembrane region" description="Helical" evidence="1">
    <location>
        <begin position="399"/>
        <end position="419"/>
    </location>
</feature>
<reference key="1">
    <citation type="journal article" date="1993" name="Mol. Microbiol.">
        <title>Bacillus subtilis genome project: cloning and sequencing of the 97 kb region from 325 degrees to 333 degrees.</title>
        <authorList>
            <person name="Glaser P."/>
            <person name="Kunst F."/>
            <person name="Arnaud M."/>
            <person name="Coudart M.P."/>
            <person name="Gonzales W."/>
            <person name="Hullo M.-F."/>
            <person name="Ionescu M."/>
            <person name="Lubochinsky B."/>
            <person name="Marcelino L."/>
            <person name="Moszer I."/>
            <person name="Presecan E."/>
            <person name="Santana M."/>
            <person name="Schneider E."/>
            <person name="Schweizer J."/>
            <person name="Vertes A."/>
            <person name="Rapoport G."/>
            <person name="Danchin A."/>
        </authorList>
    </citation>
    <scope>NUCLEOTIDE SEQUENCE [GENOMIC DNA]</scope>
    <source>
        <strain>168</strain>
    </source>
</reference>
<reference key="2">
    <citation type="journal article" date="1997" name="Nature">
        <title>The complete genome sequence of the Gram-positive bacterium Bacillus subtilis.</title>
        <authorList>
            <person name="Kunst F."/>
            <person name="Ogasawara N."/>
            <person name="Moszer I."/>
            <person name="Albertini A.M."/>
            <person name="Alloni G."/>
            <person name="Azevedo V."/>
            <person name="Bertero M.G."/>
            <person name="Bessieres P."/>
            <person name="Bolotin A."/>
            <person name="Borchert S."/>
            <person name="Borriss R."/>
            <person name="Boursier L."/>
            <person name="Brans A."/>
            <person name="Braun M."/>
            <person name="Brignell S.C."/>
            <person name="Bron S."/>
            <person name="Brouillet S."/>
            <person name="Bruschi C.V."/>
            <person name="Caldwell B."/>
            <person name="Capuano V."/>
            <person name="Carter N.M."/>
            <person name="Choi S.-K."/>
            <person name="Codani J.-J."/>
            <person name="Connerton I.F."/>
            <person name="Cummings N.J."/>
            <person name="Daniel R.A."/>
            <person name="Denizot F."/>
            <person name="Devine K.M."/>
            <person name="Duesterhoeft A."/>
            <person name="Ehrlich S.D."/>
            <person name="Emmerson P.T."/>
            <person name="Entian K.-D."/>
            <person name="Errington J."/>
            <person name="Fabret C."/>
            <person name="Ferrari E."/>
            <person name="Foulger D."/>
            <person name="Fritz C."/>
            <person name="Fujita M."/>
            <person name="Fujita Y."/>
            <person name="Fuma S."/>
            <person name="Galizzi A."/>
            <person name="Galleron N."/>
            <person name="Ghim S.-Y."/>
            <person name="Glaser P."/>
            <person name="Goffeau A."/>
            <person name="Golightly E.J."/>
            <person name="Grandi G."/>
            <person name="Guiseppi G."/>
            <person name="Guy B.J."/>
            <person name="Haga K."/>
            <person name="Haiech J."/>
            <person name="Harwood C.R."/>
            <person name="Henaut A."/>
            <person name="Hilbert H."/>
            <person name="Holsappel S."/>
            <person name="Hosono S."/>
            <person name="Hullo M.-F."/>
            <person name="Itaya M."/>
            <person name="Jones L.-M."/>
            <person name="Joris B."/>
            <person name="Karamata D."/>
            <person name="Kasahara Y."/>
            <person name="Klaerr-Blanchard M."/>
            <person name="Klein C."/>
            <person name="Kobayashi Y."/>
            <person name="Koetter P."/>
            <person name="Koningstein G."/>
            <person name="Krogh S."/>
            <person name="Kumano M."/>
            <person name="Kurita K."/>
            <person name="Lapidus A."/>
            <person name="Lardinois S."/>
            <person name="Lauber J."/>
            <person name="Lazarevic V."/>
            <person name="Lee S.-M."/>
            <person name="Levine A."/>
            <person name="Liu H."/>
            <person name="Masuda S."/>
            <person name="Mauel C."/>
            <person name="Medigue C."/>
            <person name="Medina N."/>
            <person name="Mellado R.P."/>
            <person name="Mizuno M."/>
            <person name="Moestl D."/>
            <person name="Nakai S."/>
            <person name="Noback M."/>
            <person name="Noone D."/>
            <person name="O'Reilly M."/>
            <person name="Ogawa K."/>
            <person name="Ogiwara A."/>
            <person name="Oudega B."/>
            <person name="Park S.-H."/>
            <person name="Parro V."/>
            <person name="Pohl T.M."/>
            <person name="Portetelle D."/>
            <person name="Porwollik S."/>
            <person name="Prescott A.M."/>
            <person name="Presecan E."/>
            <person name="Pujic P."/>
            <person name="Purnelle B."/>
            <person name="Rapoport G."/>
            <person name="Rey M."/>
            <person name="Reynolds S."/>
            <person name="Rieger M."/>
            <person name="Rivolta C."/>
            <person name="Rocha E."/>
            <person name="Roche B."/>
            <person name="Rose M."/>
            <person name="Sadaie Y."/>
            <person name="Sato T."/>
            <person name="Scanlan E."/>
            <person name="Schleich S."/>
            <person name="Schroeter R."/>
            <person name="Scoffone F."/>
            <person name="Sekiguchi J."/>
            <person name="Sekowska A."/>
            <person name="Seror S.J."/>
            <person name="Serror P."/>
            <person name="Shin B.-S."/>
            <person name="Soldo B."/>
            <person name="Sorokin A."/>
            <person name="Tacconi E."/>
            <person name="Takagi T."/>
            <person name="Takahashi H."/>
            <person name="Takemaru K."/>
            <person name="Takeuchi M."/>
            <person name="Tamakoshi A."/>
            <person name="Tanaka T."/>
            <person name="Terpstra P."/>
            <person name="Tognoni A."/>
            <person name="Tosato V."/>
            <person name="Uchiyama S."/>
            <person name="Vandenbol M."/>
            <person name="Vannier F."/>
            <person name="Vassarotti A."/>
            <person name="Viari A."/>
            <person name="Wambutt R."/>
            <person name="Wedler E."/>
            <person name="Wedler H."/>
            <person name="Weitzenegger T."/>
            <person name="Winters P."/>
            <person name="Wipat A."/>
            <person name="Yamamoto H."/>
            <person name="Yamane K."/>
            <person name="Yasumoto K."/>
            <person name="Yata K."/>
            <person name="Yoshida K."/>
            <person name="Yoshikawa H.-F."/>
            <person name="Zumstein E."/>
            <person name="Yoshikawa H."/>
            <person name="Danchin A."/>
        </authorList>
    </citation>
    <scope>NUCLEOTIDE SEQUENCE [LARGE SCALE GENOMIC DNA]</scope>
    <source>
        <strain>168</strain>
    </source>
</reference>
<reference key="3">
    <citation type="journal article" date="2009" name="Microbiology">
        <title>From a consortium sequence to a unified sequence: the Bacillus subtilis 168 reference genome a decade later.</title>
        <authorList>
            <person name="Barbe V."/>
            <person name="Cruveiller S."/>
            <person name="Kunst F."/>
            <person name="Lenoble P."/>
            <person name="Meurice G."/>
            <person name="Sekowska A."/>
            <person name="Vallenet D."/>
            <person name="Wang T."/>
            <person name="Moszer I."/>
            <person name="Medigue C."/>
            <person name="Danchin A."/>
        </authorList>
    </citation>
    <scope>SEQUENCE REVISION TO C-TERMINUS</scope>
</reference>
<reference key="4">
    <citation type="journal article" date="2003" name="Mol. Microbiol.">
        <title>Identification of additional TnrA-regulated genes of Bacillus subtilis associated with a TnrA box.</title>
        <authorList>
            <person name="Yoshida K."/>
            <person name="Yamaguchi H."/>
            <person name="Kinehara M."/>
            <person name="Ohki Y.-H."/>
            <person name="Nakaura Y."/>
            <person name="Fujita Y."/>
        </authorList>
    </citation>
    <scope>REGULATION BY TNRA</scope>
</reference>
<evidence type="ECO:0000255" key="1"/>
<evidence type="ECO:0000305" key="2"/>